<gene>
    <name evidence="7" type="ordered locus">At3g51280</name>
    <name evidence="8" type="ORF">F24M12.320</name>
</gene>
<protein>
    <recommendedName>
        <fullName evidence="5">Protein POLLENLESS 3-LIKE 2</fullName>
    </recommendedName>
</protein>
<sequence length="430" mass="47977">MMRDVFRPTKSAPCSPAKPLGISRTQSESFHAIHKVPVGDSPYVRAKNVQLVEKDPERAIPLFWKAINAGDRVDSALKDMAIVMKQQNRAEEAIEAIKSLRVRCSDQAQESLDNILLDLYKRCGRLDDQIGLLKHKLFLIQKGLAFNGKRTKTARSQGKKFQVSVEQEATRLLGNLGWALMQRDNFVEAEDAYRRALSIAPDNNKMCNLGICLMKQGRIDEAKETLRRVKPAVVDGPRGVDSHLKAYERAQQMLNDLGSEMMRRGGDDKVEQRRLFDAIFGSSSIWQPQPCSEQTVKAKPKPGLSNGDGYGDENVKMSVNPVVVNPLRVDAKPFFSSKLVISNNEKLKRTRSSSQGMGMLSGIGGDHEGETNTSTRRRLSMEKKATECGLPDNKDFEDAIMAAVLGTETKVDKKRLKVFQDITLCLNQSL</sequence>
<feature type="chain" id="PRO_0000430655" description="Protein POLLENLESS 3-LIKE 2">
    <location>
        <begin position="1"/>
        <end position="430"/>
    </location>
</feature>
<feature type="repeat" description="TPR 1" evidence="3">
    <location>
        <begin position="40"/>
        <end position="73"/>
    </location>
</feature>
<feature type="repeat" description="TPR 2" evidence="3">
    <location>
        <begin position="74"/>
        <end position="107"/>
    </location>
</feature>
<feature type="repeat" description="TPR 3" evidence="3">
    <location>
        <begin position="110"/>
        <end position="143"/>
    </location>
</feature>
<feature type="repeat" description="TPR 4" evidence="3">
    <location>
        <begin position="170"/>
        <end position="203"/>
    </location>
</feature>
<feature type="repeat" description="TPR 5" evidence="3">
    <location>
        <begin position="205"/>
        <end position="236"/>
    </location>
</feature>
<feature type="repeat" description="TPR 6" evidence="3">
    <location>
        <begin position="238"/>
        <end position="257"/>
    </location>
</feature>
<feature type="region of interest" description="Disordered" evidence="4">
    <location>
        <begin position="1"/>
        <end position="21"/>
    </location>
</feature>
<feature type="region of interest" description="Disordered" evidence="4">
    <location>
        <begin position="346"/>
        <end position="376"/>
    </location>
</feature>
<feature type="coiled-coil region" evidence="2">
    <location>
        <begin position="81"/>
        <end position="107"/>
    </location>
</feature>
<dbReference type="EMBL" id="AL132980">
    <property type="protein sequence ID" value="CAB62650.1"/>
    <property type="molecule type" value="Genomic_DNA"/>
</dbReference>
<dbReference type="EMBL" id="CP002686">
    <property type="protein sequence ID" value="AEE78773.1"/>
    <property type="molecule type" value="Genomic_DNA"/>
</dbReference>
<dbReference type="EMBL" id="BT006438">
    <property type="protein sequence ID" value="AAP21246.1"/>
    <property type="molecule type" value="mRNA"/>
</dbReference>
<dbReference type="EMBL" id="AK227990">
    <property type="protein sequence ID" value="BAE99956.1"/>
    <property type="molecule type" value="mRNA"/>
</dbReference>
<dbReference type="PIR" id="T45759">
    <property type="entry name" value="T45759"/>
</dbReference>
<dbReference type="RefSeq" id="NP_190696.1">
    <property type="nucleotide sequence ID" value="NM_114987.6"/>
</dbReference>
<dbReference type="SMR" id="Q9SD20"/>
<dbReference type="BioGRID" id="9609">
    <property type="interactions" value="2"/>
</dbReference>
<dbReference type="FunCoup" id="Q9SD20">
    <property type="interactions" value="576"/>
</dbReference>
<dbReference type="IntAct" id="Q9SD20">
    <property type="interactions" value="1"/>
</dbReference>
<dbReference type="STRING" id="3702.Q9SD20"/>
<dbReference type="PaxDb" id="3702-AT3G51280.1"/>
<dbReference type="ProteomicsDB" id="250776"/>
<dbReference type="EnsemblPlants" id="AT3G51280.1">
    <property type="protein sequence ID" value="AT3G51280.1"/>
    <property type="gene ID" value="AT3G51280"/>
</dbReference>
<dbReference type="GeneID" id="824291"/>
<dbReference type="Gramene" id="AT3G51280.1">
    <property type="protein sequence ID" value="AT3G51280.1"/>
    <property type="gene ID" value="AT3G51280"/>
</dbReference>
<dbReference type="KEGG" id="ath:AT3G51280"/>
<dbReference type="Araport" id="AT3G51280"/>
<dbReference type="TAIR" id="AT3G51280"/>
<dbReference type="eggNOG" id="ENOG502QR54">
    <property type="taxonomic scope" value="Eukaryota"/>
</dbReference>
<dbReference type="HOGENOM" id="CLU_013792_1_0_1"/>
<dbReference type="InParanoid" id="Q9SD20"/>
<dbReference type="OMA" id="QPQPCSE"/>
<dbReference type="PhylomeDB" id="Q9SD20"/>
<dbReference type="PRO" id="PR:Q9SD20"/>
<dbReference type="Proteomes" id="UP000006548">
    <property type="component" value="Chromosome 3"/>
</dbReference>
<dbReference type="ExpressionAtlas" id="Q9SD20">
    <property type="expression patterns" value="baseline and differential"/>
</dbReference>
<dbReference type="GO" id="GO:0005634">
    <property type="term" value="C:nucleus"/>
    <property type="evidence" value="ECO:0007669"/>
    <property type="project" value="UniProtKB-SubCell"/>
</dbReference>
<dbReference type="GO" id="GO:0051301">
    <property type="term" value="P:cell division"/>
    <property type="evidence" value="ECO:0007669"/>
    <property type="project" value="UniProtKB-KW"/>
</dbReference>
<dbReference type="Gene3D" id="1.25.40.10">
    <property type="entry name" value="Tetratricopeptide repeat domain"/>
    <property type="match status" value="1"/>
</dbReference>
<dbReference type="InterPro" id="IPR044961">
    <property type="entry name" value="MS5/SDI1"/>
</dbReference>
<dbReference type="InterPro" id="IPR011990">
    <property type="entry name" value="TPR-like_helical_dom_sf"/>
</dbReference>
<dbReference type="InterPro" id="IPR019734">
    <property type="entry name" value="TPR_rpt"/>
</dbReference>
<dbReference type="PANTHER" id="PTHR36326">
    <property type="entry name" value="PROTEIN POLLENLESS 3-LIKE 2"/>
    <property type="match status" value="1"/>
</dbReference>
<dbReference type="PANTHER" id="PTHR36326:SF7">
    <property type="entry name" value="PROTEIN POLLENLESS 3-LIKE 2"/>
    <property type="match status" value="1"/>
</dbReference>
<dbReference type="Pfam" id="PF14559">
    <property type="entry name" value="TPR_19"/>
    <property type="match status" value="1"/>
</dbReference>
<dbReference type="SMART" id="SM00028">
    <property type="entry name" value="TPR"/>
    <property type="match status" value="1"/>
</dbReference>
<dbReference type="SUPFAM" id="SSF48452">
    <property type="entry name" value="TPR-like"/>
    <property type="match status" value="1"/>
</dbReference>
<dbReference type="PROSITE" id="PS50005">
    <property type="entry name" value="TPR"/>
    <property type="match status" value="1"/>
</dbReference>
<dbReference type="PROSITE" id="PS50293">
    <property type="entry name" value="TPR_REGION"/>
    <property type="match status" value="1"/>
</dbReference>
<proteinExistence type="evidence at transcript level"/>
<accession>Q9SD20</accession>
<organism>
    <name type="scientific">Arabidopsis thaliana</name>
    <name type="common">Mouse-ear cress</name>
    <dbReference type="NCBI Taxonomy" id="3702"/>
    <lineage>
        <taxon>Eukaryota</taxon>
        <taxon>Viridiplantae</taxon>
        <taxon>Streptophyta</taxon>
        <taxon>Embryophyta</taxon>
        <taxon>Tracheophyta</taxon>
        <taxon>Spermatophyta</taxon>
        <taxon>Magnoliopsida</taxon>
        <taxon>eudicotyledons</taxon>
        <taxon>Gunneridae</taxon>
        <taxon>Pentapetalae</taxon>
        <taxon>rosids</taxon>
        <taxon>malvids</taxon>
        <taxon>Brassicales</taxon>
        <taxon>Brassicaceae</taxon>
        <taxon>Camelineae</taxon>
        <taxon>Arabidopsis</taxon>
    </lineage>
</organism>
<comment type="function">
    <text evidence="1">Probably involved in the regulation of cell division.</text>
</comment>
<comment type="subcellular location">
    <subcellularLocation>
        <location evidence="1">Nucleus</location>
    </subcellularLocation>
</comment>
<comment type="similarity">
    <text evidence="6">Belongs to the MS5 protein family.</text>
</comment>
<reference key="1">
    <citation type="journal article" date="2000" name="Nature">
        <title>Sequence and analysis of chromosome 3 of the plant Arabidopsis thaliana.</title>
        <authorList>
            <person name="Salanoubat M."/>
            <person name="Lemcke K."/>
            <person name="Rieger M."/>
            <person name="Ansorge W."/>
            <person name="Unseld M."/>
            <person name="Fartmann B."/>
            <person name="Valle G."/>
            <person name="Bloecker H."/>
            <person name="Perez-Alonso M."/>
            <person name="Obermaier B."/>
            <person name="Delseny M."/>
            <person name="Boutry M."/>
            <person name="Grivell L.A."/>
            <person name="Mache R."/>
            <person name="Puigdomenech P."/>
            <person name="De Simone V."/>
            <person name="Choisne N."/>
            <person name="Artiguenave F."/>
            <person name="Robert C."/>
            <person name="Brottier P."/>
            <person name="Wincker P."/>
            <person name="Cattolico L."/>
            <person name="Weissenbach J."/>
            <person name="Saurin W."/>
            <person name="Quetier F."/>
            <person name="Schaefer M."/>
            <person name="Mueller-Auer S."/>
            <person name="Gabel C."/>
            <person name="Fuchs M."/>
            <person name="Benes V."/>
            <person name="Wurmbach E."/>
            <person name="Drzonek H."/>
            <person name="Erfle H."/>
            <person name="Jordan N."/>
            <person name="Bangert S."/>
            <person name="Wiedelmann R."/>
            <person name="Kranz H."/>
            <person name="Voss H."/>
            <person name="Holland R."/>
            <person name="Brandt P."/>
            <person name="Nyakatura G."/>
            <person name="Vezzi A."/>
            <person name="D'Angelo M."/>
            <person name="Pallavicini A."/>
            <person name="Toppo S."/>
            <person name="Simionati B."/>
            <person name="Conrad A."/>
            <person name="Hornischer K."/>
            <person name="Kauer G."/>
            <person name="Loehnert T.-H."/>
            <person name="Nordsiek G."/>
            <person name="Reichelt J."/>
            <person name="Scharfe M."/>
            <person name="Schoen O."/>
            <person name="Bargues M."/>
            <person name="Terol J."/>
            <person name="Climent J."/>
            <person name="Navarro P."/>
            <person name="Collado C."/>
            <person name="Perez-Perez A."/>
            <person name="Ottenwaelder B."/>
            <person name="Duchemin D."/>
            <person name="Cooke R."/>
            <person name="Laudie M."/>
            <person name="Berger-Llauro C."/>
            <person name="Purnelle B."/>
            <person name="Masuy D."/>
            <person name="de Haan M."/>
            <person name="Maarse A.C."/>
            <person name="Alcaraz J.-P."/>
            <person name="Cottet A."/>
            <person name="Casacuberta E."/>
            <person name="Monfort A."/>
            <person name="Argiriou A."/>
            <person name="Flores M."/>
            <person name="Liguori R."/>
            <person name="Vitale D."/>
            <person name="Mannhaupt G."/>
            <person name="Haase D."/>
            <person name="Schoof H."/>
            <person name="Rudd S."/>
            <person name="Zaccaria P."/>
            <person name="Mewes H.-W."/>
            <person name="Mayer K.F.X."/>
            <person name="Kaul S."/>
            <person name="Town C.D."/>
            <person name="Koo H.L."/>
            <person name="Tallon L.J."/>
            <person name="Jenkins J."/>
            <person name="Rooney T."/>
            <person name="Rizzo M."/>
            <person name="Walts A."/>
            <person name="Utterback T."/>
            <person name="Fujii C.Y."/>
            <person name="Shea T.P."/>
            <person name="Creasy T.H."/>
            <person name="Haas B."/>
            <person name="Maiti R."/>
            <person name="Wu D."/>
            <person name="Peterson J."/>
            <person name="Van Aken S."/>
            <person name="Pai G."/>
            <person name="Militscher J."/>
            <person name="Sellers P."/>
            <person name="Gill J.E."/>
            <person name="Feldblyum T.V."/>
            <person name="Preuss D."/>
            <person name="Lin X."/>
            <person name="Nierman W.C."/>
            <person name="Salzberg S.L."/>
            <person name="White O."/>
            <person name="Venter J.C."/>
            <person name="Fraser C.M."/>
            <person name="Kaneko T."/>
            <person name="Nakamura Y."/>
            <person name="Sato S."/>
            <person name="Kato T."/>
            <person name="Asamizu E."/>
            <person name="Sasamoto S."/>
            <person name="Kimura T."/>
            <person name="Idesawa K."/>
            <person name="Kawashima K."/>
            <person name="Kishida Y."/>
            <person name="Kiyokawa C."/>
            <person name="Kohara M."/>
            <person name="Matsumoto M."/>
            <person name="Matsuno A."/>
            <person name="Muraki A."/>
            <person name="Nakayama S."/>
            <person name="Nakazaki N."/>
            <person name="Shinpo S."/>
            <person name="Takeuchi C."/>
            <person name="Wada T."/>
            <person name="Watanabe A."/>
            <person name="Yamada M."/>
            <person name="Yasuda M."/>
            <person name="Tabata S."/>
        </authorList>
    </citation>
    <scope>NUCLEOTIDE SEQUENCE [LARGE SCALE GENOMIC DNA]</scope>
    <source>
        <strain>cv. Columbia</strain>
    </source>
</reference>
<reference key="2">
    <citation type="journal article" date="2017" name="Plant J.">
        <title>Araport11: a complete reannotation of the Arabidopsis thaliana reference genome.</title>
        <authorList>
            <person name="Cheng C.Y."/>
            <person name="Krishnakumar V."/>
            <person name="Chan A.P."/>
            <person name="Thibaud-Nissen F."/>
            <person name="Schobel S."/>
            <person name="Town C.D."/>
        </authorList>
    </citation>
    <scope>GENOME REANNOTATION</scope>
    <source>
        <strain>cv. Columbia</strain>
    </source>
</reference>
<reference key="3">
    <citation type="journal article" date="2003" name="Science">
        <title>Empirical analysis of transcriptional activity in the Arabidopsis genome.</title>
        <authorList>
            <person name="Yamada K."/>
            <person name="Lim J."/>
            <person name="Dale J.M."/>
            <person name="Chen H."/>
            <person name="Shinn P."/>
            <person name="Palm C.J."/>
            <person name="Southwick A.M."/>
            <person name="Wu H.C."/>
            <person name="Kim C.J."/>
            <person name="Nguyen M."/>
            <person name="Pham P.K."/>
            <person name="Cheuk R.F."/>
            <person name="Karlin-Newmann G."/>
            <person name="Liu S.X."/>
            <person name="Lam B."/>
            <person name="Sakano H."/>
            <person name="Wu T."/>
            <person name="Yu G."/>
            <person name="Miranda M."/>
            <person name="Quach H.L."/>
            <person name="Tripp M."/>
            <person name="Chang C.H."/>
            <person name="Lee J.M."/>
            <person name="Toriumi M.J."/>
            <person name="Chan M.M."/>
            <person name="Tang C.C."/>
            <person name="Onodera C.S."/>
            <person name="Deng J.M."/>
            <person name="Akiyama K."/>
            <person name="Ansari Y."/>
            <person name="Arakawa T."/>
            <person name="Banh J."/>
            <person name="Banno F."/>
            <person name="Bowser L."/>
            <person name="Brooks S.Y."/>
            <person name="Carninci P."/>
            <person name="Chao Q."/>
            <person name="Choy N."/>
            <person name="Enju A."/>
            <person name="Goldsmith A.D."/>
            <person name="Gurjal M."/>
            <person name="Hansen N.F."/>
            <person name="Hayashizaki Y."/>
            <person name="Johnson-Hopson C."/>
            <person name="Hsuan V.W."/>
            <person name="Iida K."/>
            <person name="Karnes M."/>
            <person name="Khan S."/>
            <person name="Koesema E."/>
            <person name="Ishida J."/>
            <person name="Jiang P.X."/>
            <person name="Jones T."/>
            <person name="Kawai J."/>
            <person name="Kamiya A."/>
            <person name="Meyers C."/>
            <person name="Nakajima M."/>
            <person name="Narusaka M."/>
            <person name="Seki M."/>
            <person name="Sakurai T."/>
            <person name="Satou M."/>
            <person name="Tamse R."/>
            <person name="Vaysberg M."/>
            <person name="Wallender E.K."/>
            <person name="Wong C."/>
            <person name="Yamamura Y."/>
            <person name="Yuan S."/>
            <person name="Shinozaki K."/>
            <person name="Davis R.W."/>
            <person name="Theologis A."/>
            <person name="Ecker J.R."/>
        </authorList>
    </citation>
    <scope>NUCLEOTIDE SEQUENCE [LARGE SCALE MRNA]</scope>
    <source>
        <strain>cv. Columbia</strain>
    </source>
</reference>
<reference key="4">
    <citation type="submission" date="2006-07" db="EMBL/GenBank/DDBJ databases">
        <title>Large-scale analysis of RIKEN Arabidopsis full-length (RAFL) cDNAs.</title>
        <authorList>
            <person name="Totoki Y."/>
            <person name="Seki M."/>
            <person name="Ishida J."/>
            <person name="Nakajima M."/>
            <person name="Enju A."/>
            <person name="Kamiya A."/>
            <person name="Narusaka M."/>
            <person name="Shin-i T."/>
            <person name="Nakagawa M."/>
            <person name="Sakamoto N."/>
            <person name="Oishi K."/>
            <person name="Kohara Y."/>
            <person name="Kobayashi M."/>
            <person name="Toyoda A."/>
            <person name="Sakaki Y."/>
            <person name="Sakurai T."/>
            <person name="Iida K."/>
            <person name="Akiyama K."/>
            <person name="Satou M."/>
            <person name="Toyoda T."/>
            <person name="Konagaya A."/>
            <person name="Carninci P."/>
            <person name="Kawai J."/>
            <person name="Hayashizaki Y."/>
            <person name="Shinozaki K."/>
        </authorList>
    </citation>
    <scope>NUCLEOTIDE SEQUENCE [LARGE SCALE MRNA]</scope>
    <source>
        <strain>cv. Columbia</strain>
    </source>
</reference>
<reference key="5">
    <citation type="journal article" date="1999" name="Sex. Plant Reprod.">
        <title>Anther developmental defects in Arabidopsis thaliana male-sterile mutants.</title>
        <authorList>
            <person name="Sanders P.M."/>
            <person name="Bui A.Q."/>
            <person name="Weterings K."/>
            <person name="McIntire K.N."/>
            <person name="Hsu Y.-C."/>
            <person name="Lee P.Y."/>
            <person name="Truong M.T."/>
            <person name="Beals T.B."/>
            <person name="Goldberg R.B."/>
        </authorList>
    </citation>
    <scope>GENE FAMILY</scope>
    <scope>NOMENCLATURE</scope>
</reference>
<keyword id="KW-0131">Cell cycle</keyword>
<keyword id="KW-0132">Cell division</keyword>
<keyword id="KW-0175">Coiled coil</keyword>
<keyword id="KW-0539">Nucleus</keyword>
<keyword id="KW-1185">Reference proteome</keyword>
<keyword id="KW-0677">Repeat</keyword>
<keyword id="KW-0802">TPR repeat</keyword>
<evidence type="ECO:0000250" key="1">
    <source>
        <dbReference type="UniProtKB" id="Q9SUC3"/>
    </source>
</evidence>
<evidence type="ECO:0000255" key="2"/>
<evidence type="ECO:0000255" key="3">
    <source>
        <dbReference type="PROSITE-ProRule" id="PRU00339"/>
    </source>
</evidence>
<evidence type="ECO:0000256" key="4">
    <source>
        <dbReference type="SAM" id="MobiDB-lite"/>
    </source>
</evidence>
<evidence type="ECO:0000303" key="5">
    <source ref="5"/>
</evidence>
<evidence type="ECO:0000305" key="6">
    <source ref="5"/>
</evidence>
<evidence type="ECO:0000312" key="7">
    <source>
        <dbReference type="Araport" id="AT3G51280"/>
    </source>
</evidence>
<evidence type="ECO:0000312" key="8">
    <source>
        <dbReference type="EMBL" id="CAB62650.1"/>
    </source>
</evidence>
<name>MS5L2_ARATH</name>